<feature type="chain" id="PRO_0000456082" description="Geminin homolog">
    <location>
        <begin position="1"/>
        <end position="180"/>
    </location>
</feature>
<feature type="region of interest" description="Disordered" evidence="2">
    <location>
        <begin position="1"/>
        <end position="29"/>
    </location>
</feature>
<feature type="compositionally biased region" description="Polar residues" evidence="2">
    <location>
        <begin position="1"/>
        <end position="27"/>
    </location>
</feature>
<gene>
    <name evidence="4 8" type="primary">gmn-1</name>
    <name evidence="8" type="ORF">Y75B8A.17</name>
</gene>
<name>GEMI_CAEEL</name>
<accession>G5EEM1</accession>
<sequence>MSRIGLQQLNNSARNSPFGSEKATGTKQIPEPLKLTAQLKKYQPITPSPLASATTITPVLSPFDVFCDDDQEAKNVETQMFEYGTVSTQTIINVPHVQPKITEADLTSEKPTVNYLRVMADRLQMDLDDEMDRNQRLVAELGDLDEKMRKIDDDTEILLEVLADIDEEQQTDEEIGTAQL</sequence>
<comment type="function">
    <text evidence="3">Inhibits DNA replication by binding to the DNA replication licensing factor cdt-1 (PubMed:15811859). Its interaction with cdt-1 prevents the cdt-1 loading of the mini-chromosome maintenance (MCM) complex onto DNA and therefore DNA replication licencing (PubMed:15811859).</text>
</comment>
<comment type="subunit">
    <text evidence="3">Homodimer (PubMed:15811859). Interacts with cdt-1; the interaction most likely inhibits the ability of cdt-1 to load the mini-chromosome maintenance (MCM) complex onto DNA and therefore reduces DNA replication licensing activity (PubMed:15811859). Interacts with nob-1 and ceh-32 (PubMed:15811859).</text>
</comment>
<comment type="subcellular location">
    <subcellularLocation>
        <location evidence="1">Cytoplasm</location>
    </subcellularLocation>
    <subcellularLocation>
        <location evidence="1">Nucleus</location>
    </subcellularLocation>
    <text evidence="1">Mainly cytoplasmic, but can be re-localized to the nucleus.</text>
</comment>
<comment type="disruption phenotype">
    <text evidence="3">RNAi-mediated knockdown results in sterility in 20% of animals (PubMed:15811859). Sterile animals have severe oogenesis defects and partially differentiated germ cells accumulate in the proximal arm of the gonad (PubMed:15811859). Furthermore, germ nuclei in the distal region of the gonad are enlarged, and their nucleoli are misshapen (PubMed:15811859). Sterile animals also have mitotic defects whereby pairs of chromosome bridge, which is indicative of a defect in coordination between endoreduplication and the nuclear division cycle (PubMed:15811859).</text>
</comment>
<comment type="similarity">
    <text evidence="5">Belongs to the geminin family.</text>
</comment>
<dbReference type="EMBL" id="AB190260">
    <property type="protein sequence ID" value="BAD98298.1"/>
    <property type="molecule type" value="mRNA"/>
</dbReference>
<dbReference type="EMBL" id="BX284603">
    <property type="protein sequence ID" value="CAA22084.1"/>
    <property type="molecule type" value="Genomic_DNA"/>
</dbReference>
<dbReference type="PIR" id="T27384">
    <property type="entry name" value="T27384"/>
</dbReference>
<dbReference type="RefSeq" id="NP_001379042.1">
    <property type="nucleotide sequence ID" value="NM_001392216.1"/>
</dbReference>
<dbReference type="RefSeq" id="NP_499589.1">
    <property type="nucleotide sequence ID" value="NM_067188.1"/>
</dbReference>
<dbReference type="SMR" id="G5EEM1"/>
<dbReference type="FunCoup" id="G5EEM1">
    <property type="interactions" value="60"/>
</dbReference>
<dbReference type="IntAct" id="G5EEM1">
    <property type="interactions" value="2"/>
</dbReference>
<dbReference type="STRING" id="6239.Y75B8A.17.1"/>
<dbReference type="PaxDb" id="6239-Y75B8A.17"/>
<dbReference type="PeptideAtlas" id="G5EEM1"/>
<dbReference type="EnsemblMetazoa" id="Y75B8A.17.1">
    <property type="protein sequence ID" value="Y75B8A.17.1"/>
    <property type="gene ID" value="WBGene00013552"/>
</dbReference>
<dbReference type="GeneID" id="176651"/>
<dbReference type="AGR" id="WB:WBGene00013552"/>
<dbReference type="WormBase" id="Y75B8A.17">
    <property type="protein sequence ID" value="CE23028"/>
    <property type="gene ID" value="WBGene00013552"/>
    <property type="gene designation" value="gmn-1"/>
</dbReference>
<dbReference type="eggNOG" id="ENOG502TEGT">
    <property type="taxonomic scope" value="Eukaryota"/>
</dbReference>
<dbReference type="HOGENOM" id="CLU_1429173_0_0_1"/>
<dbReference type="InParanoid" id="G5EEM1"/>
<dbReference type="OMA" id="NYLRVMA"/>
<dbReference type="OrthoDB" id="5834466at2759"/>
<dbReference type="PRO" id="PR:G5EEM1"/>
<dbReference type="Proteomes" id="UP000001940">
    <property type="component" value="Chromosome III"/>
</dbReference>
<dbReference type="Bgee" id="WBGene00013552">
    <property type="expression patterns" value="Expressed in embryo and 4 other cell types or tissues"/>
</dbReference>
<dbReference type="GO" id="GO:0005737">
    <property type="term" value="C:cytoplasm"/>
    <property type="evidence" value="ECO:0007669"/>
    <property type="project" value="UniProtKB-SubCell"/>
</dbReference>
<dbReference type="GO" id="GO:0005634">
    <property type="term" value="C:nucleus"/>
    <property type="evidence" value="ECO:0007669"/>
    <property type="project" value="UniProtKB-SubCell"/>
</dbReference>
<dbReference type="GO" id="GO:0140297">
    <property type="term" value="F:DNA-binding transcription factor binding"/>
    <property type="evidence" value="ECO:0000353"/>
    <property type="project" value="UniProtKB"/>
</dbReference>
<dbReference type="GO" id="GO:0045786">
    <property type="term" value="P:negative regulation of cell cycle"/>
    <property type="evidence" value="ECO:0000315"/>
    <property type="project" value="UniProtKB"/>
</dbReference>
<dbReference type="GO" id="GO:0008156">
    <property type="term" value="P:negative regulation of DNA replication"/>
    <property type="evidence" value="ECO:0000314"/>
    <property type="project" value="UniProtKB"/>
</dbReference>
<dbReference type="SUPFAM" id="SSF111469">
    <property type="entry name" value="Geminin coiled-coil domain"/>
    <property type="match status" value="1"/>
</dbReference>
<protein>
    <recommendedName>
        <fullName evidence="5">Geminin homolog</fullName>
    </recommendedName>
</protein>
<reference evidence="6" key="1">
    <citation type="journal article" date="2005" name="J. Biol. Chem.">
        <title>Caenorhabditis elegans geminin homologue participates in cell cycle regulation and germ line development.</title>
        <authorList>
            <person name="Yanagi K."/>
            <person name="Mizuno T."/>
            <person name="Tsuyama T."/>
            <person name="Tada S."/>
            <person name="Iida Y."/>
            <person name="Sugimoto A."/>
            <person name="Eki T."/>
            <person name="Enomoto T."/>
            <person name="Hanaoka F."/>
        </authorList>
    </citation>
    <scope>NUCLEOTIDE SEQUENCE [MRNA]</scope>
    <scope>FUNCTION</scope>
    <scope>SUBUNIT</scope>
    <scope>INTERACTION WITH CDT-1; NOB-1 AND CEH-32</scope>
    <scope>DISRUPTION PHENOTYPE</scope>
</reference>
<reference evidence="7" key="2">
    <citation type="journal article" date="1998" name="Science">
        <title>Genome sequence of the nematode C. elegans: a platform for investigating biology.</title>
        <authorList>
            <consortium name="The C. elegans sequencing consortium"/>
        </authorList>
    </citation>
    <scope>NUCLEOTIDE SEQUENCE [LARGE SCALE GENOMIC DNA]</scope>
    <source>
        <strain evidence="7">Bristol N2</strain>
    </source>
</reference>
<keyword id="KW-0963">Cytoplasm</keyword>
<keyword id="KW-0236">DNA replication inhibitor</keyword>
<keyword id="KW-0539">Nucleus</keyword>
<keyword id="KW-1185">Reference proteome</keyword>
<organism evidence="7">
    <name type="scientific">Caenorhabditis elegans</name>
    <dbReference type="NCBI Taxonomy" id="6239"/>
    <lineage>
        <taxon>Eukaryota</taxon>
        <taxon>Metazoa</taxon>
        <taxon>Ecdysozoa</taxon>
        <taxon>Nematoda</taxon>
        <taxon>Chromadorea</taxon>
        <taxon>Rhabditida</taxon>
        <taxon>Rhabditina</taxon>
        <taxon>Rhabditomorpha</taxon>
        <taxon>Rhabditoidea</taxon>
        <taxon>Rhabditidae</taxon>
        <taxon>Peloderinae</taxon>
        <taxon>Caenorhabditis</taxon>
    </lineage>
</organism>
<evidence type="ECO:0000250" key="1">
    <source>
        <dbReference type="UniProtKB" id="O75496"/>
    </source>
</evidence>
<evidence type="ECO:0000256" key="2">
    <source>
        <dbReference type="SAM" id="MobiDB-lite"/>
    </source>
</evidence>
<evidence type="ECO:0000269" key="3">
    <source>
    </source>
</evidence>
<evidence type="ECO:0000303" key="4">
    <source>
    </source>
</evidence>
<evidence type="ECO:0000305" key="5"/>
<evidence type="ECO:0000312" key="6">
    <source>
        <dbReference type="EMBL" id="BAD98298.1"/>
    </source>
</evidence>
<evidence type="ECO:0000312" key="7">
    <source>
        <dbReference type="Proteomes" id="UP000001940"/>
    </source>
</evidence>
<evidence type="ECO:0000312" key="8">
    <source>
        <dbReference type="WormBase" id="Y75B8A.17"/>
    </source>
</evidence>
<proteinExistence type="evidence at protein level"/>